<dbReference type="EMBL" id="AM933173">
    <property type="protein sequence ID" value="CAR36627.1"/>
    <property type="molecule type" value="Genomic_DNA"/>
</dbReference>
<dbReference type="RefSeq" id="WP_001562341.1">
    <property type="nucleotide sequence ID" value="NC_011274.1"/>
</dbReference>
<dbReference type="SMR" id="B5R699"/>
<dbReference type="KEGG" id="seg:SG0731"/>
<dbReference type="HOGENOM" id="CLU_047123_0_0_6"/>
<dbReference type="Proteomes" id="UP000008321">
    <property type="component" value="Chromosome"/>
</dbReference>
<dbReference type="GO" id="GO:0042597">
    <property type="term" value="C:periplasmic space"/>
    <property type="evidence" value="ECO:0007669"/>
    <property type="project" value="UniProtKB-SubCell"/>
</dbReference>
<dbReference type="GO" id="GO:0051301">
    <property type="term" value="P:cell division"/>
    <property type="evidence" value="ECO:0007669"/>
    <property type="project" value="UniProtKB-UniRule"/>
</dbReference>
<dbReference type="GO" id="GO:0017038">
    <property type="term" value="P:protein import"/>
    <property type="evidence" value="ECO:0007669"/>
    <property type="project" value="InterPro"/>
</dbReference>
<dbReference type="FunFam" id="2.120.10.30:FF:000022">
    <property type="entry name" value="Tol-Pal system protein TolB"/>
    <property type="match status" value="1"/>
</dbReference>
<dbReference type="FunFam" id="3.40.50.10070:FF:000001">
    <property type="entry name" value="Tol-Pal system protein TolB"/>
    <property type="match status" value="1"/>
</dbReference>
<dbReference type="Gene3D" id="2.120.10.30">
    <property type="entry name" value="TolB, C-terminal domain"/>
    <property type="match status" value="1"/>
</dbReference>
<dbReference type="Gene3D" id="3.40.50.10070">
    <property type="entry name" value="TolB, N-terminal domain"/>
    <property type="match status" value="1"/>
</dbReference>
<dbReference type="HAMAP" id="MF_00671">
    <property type="entry name" value="TolB"/>
    <property type="match status" value="1"/>
</dbReference>
<dbReference type="InterPro" id="IPR011042">
    <property type="entry name" value="6-blade_b-propeller_TolB-like"/>
</dbReference>
<dbReference type="InterPro" id="IPR011659">
    <property type="entry name" value="PD40"/>
</dbReference>
<dbReference type="InterPro" id="IPR014167">
    <property type="entry name" value="Tol-Pal_TolB"/>
</dbReference>
<dbReference type="InterPro" id="IPR007195">
    <property type="entry name" value="TolB_N"/>
</dbReference>
<dbReference type="NCBIfam" id="TIGR02800">
    <property type="entry name" value="propeller_TolB"/>
    <property type="match status" value="1"/>
</dbReference>
<dbReference type="PANTHER" id="PTHR36842:SF1">
    <property type="entry name" value="PROTEIN TOLB"/>
    <property type="match status" value="1"/>
</dbReference>
<dbReference type="PANTHER" id="PTHR36842">
    <property type="entry name" value="PROTEIN TOLB HOMOLOG"/>
    <property type="match status" value="1"/>
</dbReference>
<dbReference type="Pfam" id="PF07676">
    <property type="entry name" value="PD40"/>
    <property type="match status" value="4"/>
</dbReference>
<dbReference type="Pfam" id="PF04052">
    <property type="entry name" value="TolB_N"/>
    <property type="match status" value="1"/>
</dbReference>
<dbReference type="SUPFAM" id="SSF52964">
    <property type="entry name" value="TolB, N-terminal domain"/>
    <property type="match status" value="1"/>
</dbReference>
<dbReference type="SUPFAM" id="SSF69304">
    <property type="entry name" value="Tricorn protease N-terminal domain"/>
    <property type="match status" value="1"/>
</dbReference>
<gene>
    <name evidence="1" type="primary">tolB</name>
    <name type="ordered locus">SG0731</name>
</gene>
<reference key="1">
    <citation type="journal article" date="2008" name="Genome Res.">
        <title>Comparative genome analysis of Salmonella enteritidis PT4 and Salmonella gallinarum 287/91 provides insights into evolutionary and host adaptation pathways.</title>
        <authorList>
            <person name="Thomson N.R."/>
            <person name="Clayton D.J."/>
            <person name="Windhorst D."/>
            <person name="Vernikos G."/>
            <person name="Davidson S."/>
            <person name="Churcher C."/>
            <person name="Quail M.A."/>
            <person name="Stevens M."/>
            <person name="Jones M.A."/>
            <person name="Watson M."/>
            <person name="Barron A."/>
            <person name="Layton A."/>
            <person name="Pickard D."/>
            <person name="Kingsley R.A."/>
            <person name="Bignell A."/>
            <person name="Clark L."/>
            <person name="Harris B."/>
            <person name="Ormond D."/>
            <person name="Abdellah Z."/>
            <person name="Brooks K."/>
            <person name="Cherevach I."/>
            <person name="Chillingworth T."/>
            <person name="Woodward J."/>
            <person name="Norberczak H."/>
            <person name="Lord A."/>
            <person name="Arrowsmith C."/>
            <person name="Jagels K."/>
            <person name="Moule S."/>
            <person name="Mungall K."/>
            <person name="Saunders M."/>
            <person name="Whitehead S."/>
            <person name="Chabalgoity J.A."/>
            <person name="Maskell D."/>
            <person name="Humphreys T."/>
            <person name="Roberts M."/>
            <person name="Barrow P.A."/>
            <person name="Dougan G."/>
            <person name="Parkhill J."/>
        </authorList>
    </citation>
    <scope>NUCLEOTIDE SEQUENCE [LARGE SCALE GENOMIC DNA]</scope>
    <source>
        <strain>287/91 / NCTC 13346</strain>
    </source>
</reference>
<comment type="function">
    <text evidence="1">Part of the Tol-Pal system, which plays a role in outer membrane invagination during cell division and is important for maintaining outer membrane integrity. TolB occupies a key intermediary position in the Tol-Pal system because it communicates directly with both membrane-embedded components, Pal in the outer membrane and TolA in the inner membrane.</text>
</comment>
<comment type="subunit">
    <text evidence="1">The Tol-Pal system is composed of five core proteins: the inner membrane proteins TolA, TolQ and TolR, the periplasmic protein TolB and the outer membrane protein Pal. They form a network linking the inner and outer membranes and the peptidoglycan layer.</text>
</comment>
<comment type="subcellular location">
    <subcellularLocation>
        <location evidence="1">Periplasm</location>
    </subcellularLocation>
</comment>
<comment type="similarity">
    <text evidence="1">Belongs to the TolB family.</text>
</comment>
<accession>B5R699</accession>
<sequence>MKQALRVAFGFLMLWAAVLHAEVRIEITQGVDSARPIGVVPFKWAGPGAAPEDIGGIVAADLRNSGKFNPLDRSRLPQQPATAQEVQPTAWSALGIDAVVVGQVTPNPDGSYNVAYQLVDTGGAPGTVLAQNSYKVNKQWLRYAGHTASDEVFEKLTGIKGAFRTRIAYVVQTNGGQFPYELRVSDYDGYNQFVVHRSPQPLMSPAWSPDGSKLAYVTFESGRSALVIQTLANGAVRQVASFPRHNGAPAFSPDGTKLAFALSKTGSLNLYVMDLASGQIRQITDGRSNNTEPTWFPDSQTLAFTSDQAGRPQVYKMNINGGAAQRITWEGSQNQDADVSSDGKFMVMVSSNNGQQHIAKQDLVTGGVQVLSSTFLDETPSLAPNGTMVIYSSSQGMGSVLNLVSTDGRFKARLPATDGQVKSPAWSPYL</sequence>
<protein>
    <recommendedName>
        <fullName evidence="1">Tol-Pal system protein TolB</fullName>
    </recommendedName>
</protein>
<keyword id="KW-0131">Cell cycle</keyword>
<keyword id="KW-0132">Cell division</keyword>
<keyword id="KW-0574">Periplasm</keyword>
<keyword id="KW-0732">Signal</keyword>
<feature type="signal peptide" evidence="1">
    <location>
        <begin position="1"/>
        <end position="21"/>
    </location>
</feature>
<feature type="chain" id="PRO_5000397993" description="Tol-Pal system protein TolB" evidence="1">
    <location>
        <begin position="22"/>
        <end position="430"/>
    </location>
</feature>
<proteinExistence type="inferred from homology"/>
<evidence type="ECO:0000255" key="1">
    <source>
        <dbReference type="HAMAP-Rule" id="MF_00671"/>
    </source>
</evidence>
<name>TOLB_SALG2</name>
<organism>
    <name type="scientific">Salmonella gallinarum (strain 287/91 / NCTC 13346)</name>
    <dbReference type="NCBI Taxonomy" id="550538"/>
    <lineage>
        <taxon>Bacteria</taxon>
        <taxon>Pseudomonadati</taxon>
        <taxon>Pseudomonadota</taxon>
        <taxon>Gammaproteobacteria</taxon>
        <taxon>Enterobacterales</taxon>
        <taxon>Enterobacteriaceae</taxon>
        <taxon>Salmonella</taxon>
    </lineage>
</organism>